<keyword id="KW-0025">Alternative splicing</keyword>
<keyword id="KW-0238">DNA-binding</keyword>
<keyword id="KW-1017">Isopeptide bond</keyword>
<keyword id="KW-0479">Metal-binding</keyword>
<keyword id="KW-0539">Nucleus</keyword>
<keyword id="KW-1185">Reference proteome</keyword>
<keyword id="KW-0677">Repeat</keyword>
<keyword id="KW-0678">Repressor</keyword>
<keyword id="KW-0804">Transcription</keyword>
<keyword id="KW-0805">Transcription regulation</keyword>
<keyword id="KW-0832">Ubl conjugation</keyword>
<keyword id="KW-0862">Zinc</keyword>
<keyword id="KW-0863">Zinc-finger</keyword>
<gene>
    <name type="primary">Ikzf5</name>
    <name type="synonym">Zfpn1a5</name>
    <name type="synonym">Znfn1a5</name>
</gene>
<name>IKZF5_MOUSE</name>
<proteinExistence type="evidence at transcript level"/>
<protein>
    <recommendedName>
        <fullName>Zinc finger protein Pegasus</fullName>
    </recommendedName>
    <alternativeName>
        <fullName>Ikaros family zinc finger protein 5</fullName>
    </alternativeName>
</protein>
<dbReference type="EMBL" id="AK033716">
    <property type="protein sequence ID" value="BAC28443.1"/>
    <property type="molecule type" value="mRNA"/>
</dbReference>
<dbReference type="EMBL" id="AK088289">
    <property type="protein sequence ID" value="BAC40260.1"/>
    <property type="molecule type" value="mRNA"/>
</dbReference>
<dbReference type="EMBL" id="AK140401">
    <property type="protein sequence ID" value="BAE24372.1"/>
    <property type="molecule type" value="mRNA"/>
</dbReference>
<dbReference type="EMBL" id="AK153883">
    <property type="protein sequence ID" value="BAE32231.1"/>
    <property type="molecule type" value="mRNA"/>
</dbReference>
<dbReference type="EMBL" id="AK169384">
    <property type="protein sequence ID" value="BAE41131.1"/>
    <property type="molecule type" value="mRNA"/>
</dbReference>
<dbReference type="EMBL" id="BC048183">
    <property type="protein sequence ID" value="AAH48183.1"/>
    <property type="molecule type" value="mRNA"/>
</dbReference>
<dbReference type="EMBL" id="BC058537">
    <property type="protein sequence ID" value="AAH58537.1"/>
    <property type="molecule type" value="mRNA"/>
</dbReference>
<dbReference type="EMBL" id="BC089455">
    <property type="protein sequence ID" value="AAH89455.1"/>
    <property type="molecule type" value="mRNA"/>
</dbReference>
<dbReference type="CCDS" id="CCDS21915.1">
    <molecule id="Q8BU00-1"/>
</dbReference>
<dbReference type="RefSeq" id="NP_001405691.1">
    <molecule id="Q8BU00-3"/>
    <property type="nucleotide sequence ID" value="NM_001418762.1"/>
</dbReference>
<dbReference type="RefSeq" id="NP_001405692.1">
    <molecule id="Q8BU00-1"/>
    <property type="nucleotide sequence ID" value="NM_001418763.1"/>
</dbReference>
<dbReference type="RefSeq" id="NP_780324.2">
    <molecule id="Q8BU00-1"/>
    <property type="nucleotide sequence ID" value="NM_175115.4"/>
</dbReference>
<dbReference type="RefSeq" id="XP_006508185.1">
    <property type="nucleotide sequence ID" value="XM_006508122.3"/>
</dbReference>
<dbReference type="RefSeq" id="XP_036009269.1">
    <molecule id="Q8BU00-1"/>
    <property type="nucleotide sequence ID" value="XM_036153376.1"/>
</dbReference>
<dbReference type="RefSeq" id="XP_036009270.1">
    <molecule id="Q8BU00-2"/>
    <property type="nucleotide sequence ID" value="XM_036153377.1"/>
</dbReference>
<dbReference type="BioGRID" id="211973">
    <property type="interactions" value="2"/>
</dbReference>
<dbReference type="FunCoup" id="Q8BU00">
    <property type="interactions" value="2689"/>
</dbReference>
<dbReference type="STRING" id="10090.ENSMUSP00000035583"/>
<dbReference type="GlyGen" id="Q8BU00">
    <property type="glycosylation" value="1 site"/>
</dbReference>
<dbReference type="iPTMnet" id="Q8BU00"/>
<dbReference type="PhosphoSitePlus" id="Q8BU00"/>
<dbReference type="PaxDb" id="10090-ENSMUSP00000035583"/>
<dbReference type="PeptideAtlas" id="Q8BU00"/>
<dbReference type="ProteomicsDB" id="267117">
    <molecule id="Q8BU00-1"/>
</dbReference>
<dbReference type="ProteomicsDB" id="267118">
    <molecule id="Q8BU00-2"/>
</dbReference>
<dbReference type="ProteomicsDB" id="267119">
    <molecule id="Q8BU00-3"/>
</dbReference>
<dbReference type="Antibodypedia" id="9078">
    <property type="antibodies" value="54 antibodies from 18 providers"/>
</dbReference>
<dbReference type="DNASU" id="67143"/>
<dbReference type="Ensembl" id="ENSMUST00000046306.15">
    <molecule id="Q8BU00-1"/>
    <property type="protein sequence ID" value="ENSMUSP00000035583.9"/>
    <property type="gene ID" value="ENSMUSG00000040167.17"/>
</dbReference>
<dbReference type="Ensembl" id="ENSMUST00000121033.8">
    <molecule id="Q8BU00-3"/>
    <property type="protein sequence ID" value="ENSMUSP00000113714.2"/>
    <property type="gene ID" value="ENSMUSG00000040167.17"/>
</dbReference>
<dbReference type="GeneID" id="67143"/>
<dbReference type="KEGG" id="mmu:67143"/>
<dbReference type="UCSC" id="uc009kbj.1">
    <molecule id="Q8BU00-1"/>
    <property type="organism name" value="mouse"/>
</dbReference>
<dbReference type="AGR" id="MGI:1914393"/>
<dbReference type="CTD" id="64376"/>
<dbReference type="MGI" id="MGI:1914393">
    <property type="gene designation" value="Ikzf5"/>
</dbReference>
<dbReference type="VEuPathDB" id="HostDB:ENSMUSG00000040167"/>
<dbReference type="eggNOG" id="KOG1721">
    <property type="taxonomic scope" value="Eukaryota"/>
</dbReference>
<dbReference type="GeneTree" id="ENSGT00940000155035"/>
<dbReference type="HOGENOM" id="CLU_734778_0_0_1"/>
<dbReference type="InParanoid" id="Q8BU00"/>
<dbReference type="OMA" id="FMIQQPT"/>
<dbReference type="OrthoDB" id="5576026at2759"/>
<dbReference type="PhylomeDB" id="Q8BU00"/>
<dbReference type="TreeFam" id="TF331860"/>
<dbReference type="BioGRID-ORCS" id="67143">
    <property type="hits" value="1 hit in 77 CRISPR screens"/>
</dbReference>
<dbReference type="ChiTaRS" id="Ikzf5">
    <property type="organism name" value="mouse"/>
</dbReference>
<dbReference type="PRO" id="PR:Q8BU00"/>
<dbReference type="Proteomes" id="UP000000589">
    <property type="component" value="Chromosome 7"/>
</dbReference>
<dbReference type="RNAct" id="Q8BU00">
    <property type="molecule type" value="protein"/>
</dbReference>
<dbReference type="Bgee" id="ENSMUSG00000040167">
    <property type="expression patterns" value="Expressed in manus and 235 other cell types or tissues"/>
</dbReference>
<dbReference type="ExpressionAtlas" id="Q8BU00">
    <property type="expression patterns" value="baseline and differential"/>
</dbReference>
<dbReference type="GO" id="GO:0005634">
    <property type="term" value="C:nucleus"/>
    <property type="evidence" value="ECO:0000250"/>
    <property type="project" value="UniProtKB"/>
</dbReference>
<dbReference type="GO" id="GO:0032991">
    <property type="term" value="C:protein-containing complex"/>
    <property type="evidence" value="ECO:0007669"/>
    <property type="project" value="Ensembl"/>
</dbReference>
<dbReference type="GO" id="GO:0003682">
    <property type="term" value="F:chromatin binding"/>
    <property type="evidence" value="ECO:0000250"/>
    <property type="project" value="UniProtKB"/>
</dbReference>
<dbReference type="GO" id="GO:0001227">
    <property type="term" value="F:DNA-binding transcription repressor activity, RNA polymerase II-specific"/>
    <property type="evidence" value="ECO:0007669"/>
    <property type="project" value="Ensembl"/>
</dbReference>
<dbReference type="GO" id="GO:0019904">
    <property type="term" value="F:protein domain specific binding"/>
    <property type="evidence" value="ECO:0007669"/>
    <property type="project" value="Ensembl"/>
</dbReference>
<dbReference type="GO" id="GO:0000977">
    <property type="term" value="F:RNA polymerase II transcription regulatory region sequence-specific DNA binding"/>
    <property type="evidence" value="ECO:0007669"/>
    <property type="project" value="Ensembl"/>
</dbReference>
<dbReference type="GO" id="GO:0008270">
    <property type="term" value="F:zinc ion binding"/>
    <property type="evidence" value="ECO:0007669"/>
    <property type="project" value="UniProtKB-KW"/>
</dbReference>
<dbReference type="FunFam" id="3.30.160.60:FF:000402">
    <property type="entry name" value="IKAROS family zinc finger 5"/>
    <property type="match status" value="1"/>
</dbReference>
<dbReference type="FunFam" id="3.30.160.60:FF:000924">
    <property type="entry name" value="IKAROS family zinc finger 5"/>
    <property type="match status" value="1"/>
</dbReference>
<dbReference type="FunFam" id="3.30.160.60:FF:001097">
    <property type="entry name" value="IKAROS family zinc finger 5"/>
    <property type="match status" value="1"/>
</dbReference>
<dbReference type="Gene3D" id="3.30.160.60">
    <property type="entry name" value="Classic Zinc Finger"/>
    <property type="match status" value="3"/>
</dbReference>
<dbReference type="InterPro" id="IPR050589">
    <property type="entry name" value="Ikaros_C2H2-ZF"/>
</dbReference>
<dbReference type="InterPro" id="IPR036236">
    <property type="entry name" value="Znf_C2H2_sf"/>
</dbReference>
<dbReference type="InterPro" id="IPR013087">
    <property type="entry name" value="Znf_C2H2_type"/>
</dbReference>
<dbReference type="PANTHER" id="PTHR24404">
    <property type="entry name" value="ZINC FINGER PROTEIN"/>
    <property type="match status" value="1"/>
</dbReference>
<dbReference type="PANTHER" id="PTHR24404:SF55">
    <property type="entry name" value="ZINC FINGER PROTEIN PEGASUS"/>
    <property type="match status" value="1"/>
</dbReference>
<dbReference type="SMART" id="SM00355">
    <property type="entry name" value="ZnF_C2H2"/>
    <property type="match status" value="5"/>
</dbReference>
<dbReference type="SUPFAM" id="SSF57667">
    <property type="entry name" value="beta-beta-alpha zinc fingers"/>
    <property type="match status" value="3"/>
</dbReference>
<dbReference type="PROSITE" id="PS00028">
    <property type="entry name" value="ZINC_FINGER_C2H2_1"/>
    <property type="match status" value="3"/>
</dbReference>
<dbReference type="PROSITE" id="PS50157">
    <property type="entry name" value="ZINC_FINGER_C2H2_2"/>
    <property type="match status" value="3"/>
</dbReference>
<reference key="1">
    <citation type="journal article" date="2005" name="Science">
        <title>The transcriptional landscape of the mammalian genome.</title>
        <authorList>
            <person name="Carninci P."/>
            <person name="Kasukawa T."/>
            <person name="Katayama S."/>
            <person name="Gough J."/>
            <person name="Frith M.C."/>
            <person name="Maeda N."/>
            <person name="Oyama R."/>
            <person name="Ravasi T."/>
            <person name="Lenhard B."/>
            <person name="Wells C."/>
            <person name="Kodzius R."/>
            <person name="Shimokawa K."/>
            <person name="Bajic V.B."/>
            <person name="Brenner S.E."/>
            <person name="Batalov S."/>
            <person name="Forrest A.R."/>
            <person name="Zavolan M."/>
            <person name="Davis M.J."/>
            <person name="Wilming L.G."/>
            <person name="Aidinis V."/>
            <person name="Allen J.E."/>
            <person name="Ambesi-Impiombato A."/>
            <person name="Apweiler R."/>
            <person name="Aturaliya R.N."/>
            <person name="Bailey T.L."/>
            <person name="Bansal M."/>
            <person name="Baxter L."/>
            <person name="Beisel K.W."/>
            <person name="Bersano T."/>
            <person name="Bono H."/>
            <person name="Chalk A.M."/>
            <person name="Chiu K.P."/>
            <person name="Choudhary V."/>
            <person name="Christoffels A."/>
            <person name="Clutterbuck D.R."/>
            <person name="Crowe M.L."/>
            <person name="Dalla E."/>
            <person name="Dalrymple B.P."/>
            <person name="de Bono B."/>
            <person name="Della Gatta G."/>
            <person name="di Bernardo D."/>
            <person name="Down T."/>
            <person name="Engstrom P."/>
            <person name="Fagiolini M."/>
            <person name="Faulkner G."/>
            <person name="Fletcher C.F."/>
            <person name="Fukushima T."/>
            <person name="Furuno M."/>
            <person name="Futaki S."/>
            <person name="Gariboldi M."/>
            <person name="Georgii-Hemming P."/>
            <person name="Gingeras T.R."/>
            <person name="Gojobori T."/>
            <person name="Green R.E."/>
            <person name="Gustincich S."/>
            <person name="Harbers M."/>
            <person name="Hayashi Y."/>
            <person name="Hensch T.K."/>
            <person name="Hirokawa N."/>
            <person name="Hill D."/>
            <person name="Huminiecki L."/>
            <person name="Iacono M."/>
            <person name="Ikeo K."/>
            <person name="Iwama A."/>
            <person name="Ishikawa T."/>
            <person name="Jakt M."/>
            <person name="Kanapin A."/>
            <person name="Katoh M."/>
            <person name="Kawasawa Y."/>
            <person name="Kelso J."/>
            <person name="Kitamura H."/>
            <person name="Kitano H."/>
            <person name="Kollias G."/>
            <person name="Krishnan S.P."/>
            <person name="Kruger A."/>
            <person name="Kummerfeld S.K."/>
            <person name="Kurochkin I.V."/>
            <person name="Lareau L.F."/>
            <person name="Lazarevic D."/>
            <person name="Lipovich L."/>
            <person name="Liu J."/>
            <person name="Liuni S."/>
            <person name="McWilliam S."/>
            <person name="Madan Babu M."/>
            <person name="Madera M."/>
            <person name="Marchionni L."/>
            <person name="Matsuda H."/>
            <person name="Matsuzawa S."/>
            <person name="Miki H."/>
            <person name="Mignone F."/>
            <person name="Miyake S."/>
            <person name="Morris K."/>
            <person name="Mottagui-Tabar S."/>
            <person name="Mulder N."/>
            <person name="Nakano N."/>
            <person name="Nakauchi H."/>
            <person name="Ng P."/>
            <person name="Nilsson R."/>
            <person name="Nishiguchi S."/>
            <person name="Nishikawa S."/>
            <person name="Nori F."/>
            <person name="Ohara O."/>
            <person name="Okazaki Y."/>
            <person name="Orlando V."/>
            <person name="Pang K.C."/>
            <person name="Pavan W.J."/>
            <person name="Pavesi G."/>
            <person name="Pesole G."/>
            <person name="Petrovsky N."/>
            <person name="Piazza S."/>
            <person name="Reed J."/>
            <person name="Reid J.F."/>
            <person name="Ring B.Z."/>
            <person name="Ringwald M."/>
            <person name="Rost B."/>
            <person name="Ruan Y."/>
            <person name="Salzberg S.L."/>
            <person name="Sandelin A."/>
            <person name="Schneider C."/>
            <person name="Schoenbach C."/>
            <person name="Sekiguchi K."/>
            <person name="Semple C.A."/>
            <person name="Seno S."/>
            <person name="Sessa L."/>
            <person name="Sheng Y."/>
            <person name="Shibata Y."/>
            <person name="Shimada H."/>
            <person name="Shimada K."/>
            <person name="Silva D."/>
            <person name="Sinclair B."/>
            <person name="Sperling S."/>
            <person name="Stupka E."/>
            <person name="Sugiura K."/>
            <person name="Sultana R."/>
            <person name="Takenaka Y."/>
            <person name="Taki K."/>
            <person name="Tammoja K."/>
            <person name="Tan S.L."/>
            <person name="Tang S."/>
            <person name="Taylor M.S."/>
            <person name="Tegner J."/>
            <person name="Teichmann S.A."/>
            <person name="Ueda H.R."/>
            <person name="van Nimwegen E."/>
            <person name="Verardo R."/>
            <person name="Wei C.L."/>
            <person name="Yagi K."/>
            <person name="Yamanishi H."/>
            <person name="Zabarovsky E."/>
            <person name="Zhu S."/>
            <person name="Zimmer A."/>
            <person name="Hide W."/>
            <person name="Bult C."/>
            <person name="Grimmond S.M."/>
            <person name="Teasdale R.D."/>
            <person name="Liu E.T."/>
            <person name="Brusic V."/>
            <person name="Quackenbush J."/>
            <person name="Wahlestedt C."/>
            <person name="Mattick J.S."/>
            <person name="Hume D.A."/>
            <person name="Kai C."/>
            <person name="Sasaki D."/>
            <person name="Tomaru Y."/>
            <person name="Fukuda S."/>
            <person name="Kanamori-Katayama M."/>
            <person name="Suzuki M."/>
            <person name="Aoki J."/>
            <person name="Arakawa T."/>
            <person name="Iida J."/>
            <person name="Imamura K."/>
            <person name="Itoh M."/>
            <person name="Kato T."/>
            <person name="Kawaji H."/>
            <person name="Kawagashira N."/>
            <person name="Kawashima T."/>
            <person name="Kojima M."/>
            <person name="Kondo S."/>
            <person name="Konno H."/>
            <person name="Nakano K."/>
            <person name="Ninomiya N."/>
            <person name="Nishio T."/>
            <person name="Okada M."/>
            <person name="Plessy C."/>
            <person name="Shibata K."/>
            <person name="Shiraki T."/>
            <person name="Suzuki S."/>
            <person name="Tagami M."/>
            <person name="Waki K."/>
            <person name="Watahiki A."/>
            <person name="Okamura-Oho Y."/>
            <person name="Suzuki H."/>
            <person name="Kawai J."/>
            <person name="Hayashizaki Y."/>
        </authorList>
    </citation>
    <scope>NUCLEOTIDE SEQUENCE [LARGE SCALE MRNA] (ISOFORMS 1; 2 AND 3)</scope>
    <source>
        <strain>C57BL/6J</strain>
        <strain>NOD</strain>
        <tissue>Cecum</tissue>
        <tissue>Heart</tissue>
        <tissue>Medulla oblongata</tissue>
        <tissue>Thymus</tissue>
    </source>
</reference>
<reference key="2">
    <citation type="journal article" date="2004" name="Genome Res.">
        <title>The status, quality, and expansion of the NIH full-length cDNA project: the Mammalian Gene Collection (MGC).</title>
        <authorList>
            <consortium name="The MGC Project Team"/>
        </authorList>
    </citation>
    <scope>NUCLEOTIDE SEQUENCE [LARGE SCALE MRNA] (ISOFORM 1)</scope>
    <source>
        <strain>C57BL/6J</strain>
        <tissue>Brain</tissue>
    </source>
</reference>
<comment type="function">
    <text evidence="2">Transcriptional repressor that binds the core 5'GNNTGTNG-3' DNA consensus sequence (By similarity). Involved in megakaryocyte differentiation (By similarity).</text>
</comment>
<comment type="subunit">
    <text evidence="1">Self-associates. Interacts with other family members; IKZF1, IKZF2, IKZF3 and IKZF4 (By similarity).</text>
</comment>
<comment type="subcellular location">
    <subcellularLocation>
        <location evidence="2">Nucleus</location>
    </subcellularLocation>
</comment>
<comment type="alternative products">
    <event type="alternative splicing"/>
    <isoform>
        <id>Q8BU00-1</id>
        <name>1</name>
        <sequence type="displayed"/>
    </isoform>
    <isoform>
        <id>Q8BU00-2</id>
        <name>2</name>
        <sequence type="described" ref="VSP_027692 VSP_027693"/>
    </isoform>
    <isoform>
        <id>Q8BU00-3</id>
        <name>3</name>
        <sequence type="described" ref="VSP_027694"/>
    </isoform>
</comment>
<comment type="domain">
    <text evidence="1">The N-terminal zinc fingers are involved in sequence-specific DNA binding and heterotypic associations with other family members.</text>
</comment>
<comment type="domain">
    <text evidence="1">C-terminal zinc fingers mediate homodimerization.</text>
</comment>
<comment type="miscellaneous">
    <text>'Pegasus' was the winged horse in Greek mythology.</text>
</comment>
<comment type="similarity">
    <text evidence="6">Belongs to the Ikaros C2H2-type zinc-finger protein family.</text>
</comment>
<feature type="chain" id="PRO_0000299472" description="Zinc finger protein Pegasus">
    <location>
        <begin position="1"/>
        <end position="419"/>
    </location>
</feature>
<feature type="zinc finger region" description="C2H2-type 1" evidence="3">
    <location>
        <begin position="82"/>
        <end position="104"/>
    </location>
</feature>
<feature type="zinc finger region" description="C2H2-type 2" evidence="3">
    <location>
        <begin position="110"/>
        <end position="132"/>
    </location>
</feature>
<feature type="zinc finger region" description="C2H2-type 3" evidence="3">
    <location>
        <begin position="138"/>
        <end position="161"/>
    </location>
</feature>
<feature type="zinc finger region" description="C2H2-type 4" evidence="3">
    <location>
        <begin position="364"/>
        <end position="386"/>
    </location>
</feature>
<feature type="zinc finger region" description="C2H2-type 5" evidence="3">
    <location>
        <begin position="392"/>
        <end position="416"/>
    </location>
</feature>
<feature type="region of interest" description="Disordered" evidence="4">
    <location>
        <begin position="36"/>
        <end position="55"/>
    </location>
</feature>
<feature type="region of interest" description="Disordered" evidence="4">
    <location>
        <begin position="262"/>
        <end position="284"/>
    </location>
</feature>
<feature type="region of interest" description="Disordered" evidence="4">
    <location>
        <begin position="297"/>
        <end position="356"/>
    </location>
</feature>
<feature type="compositionally biased region" description="Polar residues" evidence="4">
    <location>
        <begin position="262"/>
        <end position="273"/>
    </location>
</feature>
<feature type="compositionally biased region" description="Low complexity" evidence="4">
    <location>
        <begin position="297"/>
        <end position="311"/>
    </location>
</feature>
<feature type="compositionally biased region" description="Polar residues" evidence="4">
    <location>
        <begin position="332"/>
        <end position="349"/>
    </location>
</feature>
<feature type="cross-link" description="Glycyl lysine isopeptide (Lys-Gly) (interchain with G-Cter in SUMO2)" evidence="2">
    <location>
        <position position="5"/>
    </location>
</feature>
<feature type="cross-link" description="Glycyl lysine isopeptide (Lys-Gly) (interchain with G-Cter in SUMO2)" evidence="2">
    <location>
        <position position="185"/>
    </location>
</feature>
<feature type="splice variant" id="VSP_027692" description="In isoform 2." evidence="5">
    <location>
        <begin position="1"/>
        <end position="67"/>
    </location>
</feature>
<feature type="splice variant" id="VSP_027693" description="In isoform 2." evidence="5">
    <original>GMLVDGFERTFDGKLKCRYCNYASKGTARLIEHIRI</original>
    <variation>MHFCKEFYFCISSHMQWTNMKSPMSELLLQSLPCLS</variation>
    <location>
        <begin position="68"/>
        <end position="103"/>
    </location>
</feature>
<feature type="splice variant" id="VSP_027694" description="In isoform 3." evidence="5">
    <location>
        <begin position="106"/>
        <end position="258"/>
    </location>
</feature>
<feature type="sequence conflict" description="In Ref. 1; BAE32231." evidence="6" ref="1">
    <original>L</original>
    <variation>W</variation>
    <location>
        <position position="9"/>
    </location>
</feature>
<organism>
    <name type="scientific">Mus musculus</name>
    <name type="common">Mouse</name>
    <dbReference type="NCBI Taxonomy" id="10090"/>
    <lineage>
        <taxon>Eukaryota</taxon>
        <taxon>Metazoa</taxon>
        <taxon>Chordata</taxon>
        <taxon>Craniata</taxon>
        <taxon>Vertebrata</taxon>
        <taxon>Euteleostomi</taxon>
        <taxon>Mammalia</taxon>
        <taxon>Eutheria</taxon>
        <taxon>Euarchontoglires</taxon>
        <taxon>Glires</taxon>
        <taxon>Rodentia</taxon>
        <taxon>Myomorpha</taxon>
        <taxon>Muroidea</taxon>
        <taxon>Muridae</taxon>
        <taxon>Murinae</taxon>
        <taxon>Mus</taxon>
        <taxon>Mus</taxon>
    </lineage>
</organism>
<sequence length="419" mass="46400">MGEKKPEPLDFVKDFQEYLTQQTHHVNMISGSVSGDKEAETLQGAGTDGDQNGLDHPSVEVSLDENSGMLVDGFERTFDGKLKCRYCNYASKGTARLIEHIRIHTGEKPHRCHLCPFASAYERHLEAHMRSHTGEKPYKCELCSFRCSDRSNLSHHRRRKHKMVPIKGTRSSLSSKKMWGVLQKKTSNLGYSRRALINLSPPSMVVQKPDYLNDFTHEIPNIQTDSYEAMAKTTPTGGLPRDPQELMVDNPLNQLSTLAGQLSSLPPENQNPASPDVDACPDEKPFMIQQPSAQAVVSAVSASIPQSSSPTSPEPRPSHSQRNYSPVAGPSSEPSAHTSTPSIGNSQPSTPAPTLPVQDPQLLHHCQHCDVYFADNVLYTVHMGCHGYDSPFQCNVCGCKCKDKYDFACHFARGQHNQH</sequence>
<evidence type="ECO:0000250" key="1"/>
<evidence type="ECO:0000250" key="2">
    <source>
        <dbReference type="UniProtKB" id="Q9H5V7"/>
    </source>
</evidence>
<evidence type="ECO:0000255" key="3">
    <source>
        <dbReference type="PROSITE-ProRule" id="PRU00042"/>
    </source>
</evidence>
<evidence type="ECO:0000256" key="4">
    <source>
        <dbReference type="SAM" id="MobiDB-lite"/>
    </source>
</evidence>
<evidence type="ECO:0000303" key="5">
    <source>
    </source>
</evidence>
<evidence type="ECO:0000305" key="6"/>
<accession>Q8BU00</accession>
<accession>Q3U549</accession>
<accession>Q3USG0</accession>
<accession>Q8BZR5</accession>